<keyword id="KW-0119">Carbohydrate metabolism</keyword>
<keyword id="KW-0903">Direct protein sequencing</keyword>
<keyword id="KW-1015">Disulfide bond</keyword>
<keyword id="KW-0313">Glucose metabolism</keyword>
<keyword id="KW-0372">Hormone</keyword>
<keyword id="KW-0964">Secreted</keyword>
<name>INS_ALLMI</name>
<protein>
    <recommendedName>
        <fullName>Insulin</fullName>
    </recommendedName>
    <component>
        <recommendedName>
            <fullName>Insulin B chain</fullName>
        </recommendedName>
    </component>
    <component>
        <recommendedName>
            <fullName>Insulin A chain</fullName>
        </recommendedName>
    </component>
</protein>
<accession>P12703</accession>
<comment type="function">
    <text>Insulin decreases blood glucose concentration. It increases cell permeability to monosaccharides, amino acids and fatty acids. It accelerates glycolysis, the pentose phosphate cycle, and glycogen synthesis in liver.</text>
</comment>
<comment type="subunit">
    <text>Heterodimer of a B chain and an A chain linked by two disulfide bonds.</text>
</comment>
<comment type="subcellular location">
    <subcellularLocation>
        <location>Secreted</location>
    </subcellularLocation>
</comment>
<comment type="similarity">
    <text evidence="1">Belongs to the insulin family.</text>
</comment>
<dbReference type="PIR" id="S07210">
    <property type="entry name" value="INAQ"/>
</dbReference>
<dbReference type="SMR" id="P12703"/>
<dbReference type="GO" id="GO:0005615">
    <property type="term" value="C:extracellular space"/>
    <property type="evidence" value="ECO:0007669"/>
    <property type="project" value="TreeGrafter"/>
</dbReference>
<dbReference type="GO" id="GO:0005179">
    <property type="term" value="F:hormone activity"/>
    <property type="evidence" value="ECO:0007669"/>
    <property type="project" value="UniProtKB-KW"/>
</dbReference>
<dbReference type="GO" id="GO:0006006">
    <property type="term" value="P:glucose metabolic process"/>
    <property type="evidence" value="ECO:0007669"/>
    <property type="project" value="UniProtKB-KW"/>
</dbReference>
<dbReference type="CDD" id="cd04367">
    <property type="entry name" value="IlGF_insulin_like"/>
    <property type="match status" value="1"/>
</dbReference>
<dbReference type="Gene3D" id="1.10.100.10">
    <property type="entry name" value="Insulin-like"/>
    <property type="match status" value="1"/>
</dbReference>
<dbReference type="InterPro" id="IPR004825">
    <property type="entry name" value="Insulin"/>
</dbReference>
<dbReference type="InterPro" id="IPR016179">
    <property type="entry name" value="Insulin-like"/>
</dbReference>
<dbReference type="InterPro" id="IPR036438">
    <property type="entry name" value="Insulin-like_sf"/>
</dbReference>
<dbReference type="InterPro" id="IPR022353">
    <property type="entry name" value="Insulin_CS"/>
</dbReference>
<dbReference type="InterPro" id="IPR022352">
    <property type="entry name" value="Insulin_family"/>
</dbReference>
<dbReference type="PANTHER" id="PTHR11454:SF9">
    <property type="entry name" value="INSULIN"/>
    <property type="match status" value="1"/>
</dbReference>
<dbReference type="PANTHER" id="PTHR11454">
    <property type="entry name" value="INSULIN/INSULIN GROWTH FACTOR"/>
    <property type="match status" value="1"/>
</dbReference>
<dbReference type="Pfam" id="PF00049">
    <property type="entry name" value="Insulin"/>
    <property type="match status" value="2"/>
</dbReference>
<dbReference type="PRINTS" id="PR00277">
    <property type="entry name" value="INSULIN"/>
</dbReference>
<dbReference type="PRINTS" id="PR00276">
    <property type="entry name" value="INSULINFAMLY"/>
</dbReference>
<dbReference type="SMART" id="SM00078">
    <property type="entry name" value="IlGF"/>
    <property type="match status" value="1"/>
</dbReference>
<dbReference type="SUPFAM" id="SSF56994">
    <property type="entry name" value="Insulin-like"/>
    <property type="match status" value="1"/>
</dbReference>
<dbReference type="PROSITE" id="PS00262">
    <property type="entry name" value="INSULIN"/>
    <property type="match status" value="1"/>
</dbReference>
<reference key="1">
    <citation type="journal article" date="1984" name="Gen. Comp. Endocrinol.">
        <title>Isolation and characterization of reptilian insulin, glucagon, and pancreatic polypeptide: complete amino acid sequence of alligator (Alligator mississippiensis) insulin and pancreatic polypeptide.</title>
        <authorList>
            <person name="Lance V."/>
            <person name="Hamilton J.W."/>
            <person name="Rouse J.B."/>
            <person name="Kimmel J.R."/>
            <person name="Pollock H.G."/>
        </authorList>
    </citation>
    <scope>PROTEIN SEQUENCE</scope>
</reference>
<organism>
    <name type="scientific">Alligator mississippiensis</name>
    <name type="common">American alligator</name>
    <dbReference type="NCBI Taxonomy" id="8496"/>
    <lineage>
        <taxon>Eukaryota</taxon>
        <taxon>Metazoa</taxon>
        <taxon>Chordata</taxon>
        <taxon>Craniata</taxon>
        <taxon>Vertebrata</taxon>
        <taxon>Euteleostomi</taxon>
        <taxon>Archelosauria</taxon>
        <taxon>Archosauria</taxon>
        <taxon>Crocodylia</taxon>
        <taxon>Alligatoridae</taxon>
        <taxon>Alligatorinae</taxon>
        <taxon>Alligator</taxon>
    </lineage>
</organism>
<proteinExistence type="evidence at protein level"/>
<evidence type="ECO:0000305" key="1"/>
<sequence length="51" mass="5689">AANQRLCGSHLVDALYLVCGERGFFYSPKGGIVEQCCHNTCSLYQLENYCN</sequence>
<gene>
    <name type="primary">INS</name>
</gene>
<feature type="peptide" id="PRO_0000015742" description="Insulin B chain">
    <location>
        <begin position="1"/>
        <end position="30"/>
    </location>
</feature>
<feature type="peptide" id="PRO_0000015743" description="Insulin A chain">
    <location>
        <begin position="31"/>
        <end position="51"/>
    </location>
</feature>
<feature type="disulfide bond" description="Interchain (between B and A chains)">
    <location>
        <begin position="7"/>
        <end position="37"/>
    </location>
</feature>
<feature type="disulfide bond" description="Interchain (between B and A chains)">
    <location>
        <begin position="19"/>
        <end position="50"/>
    </location>
</feature>
<feature type="disulfide bond">
    <location>
        <begin position="36"/>
        <end position="41"/>
    </location>
</feature>
<feature type="non-consecutive residues" evidence="1">
    <location>
        <begin position="30"/>
        <end position="31"/>
    </location>
</feature>